<proteinExistence type="inferred from homology"/>
<organism>
    <name type="scientific">Salmonella newport (strain SL254)</name>
    <dbReference type="NCBI Taxonomy" id="423368"/>
    <lineage>
        <taxon>Bacteria</taxon>
        <taxon>Pseudomonadati</taxon>
        <taxon>Pseudomonadota</taxon>
        <taxon>Gammaproteobacteria</taxon>
        <taxon>Enterobacterales</taxon>
        <taxon>Enterobacteriaceae</taxon>
        <taxon>Salmonella</taxon>
    </lineage>
</organism>
<keyword id="KW-0119">Carbohydrate metabolism</keyword>
<keyword id="KW-0963">Cytoplasm</keyword>
<keyword id="KW-0456">Lyase</keyword>
<keyword id="KW-0704">Schiff base</keyword>
<protein>
    <recommendedName>
        <fullName evidence="1">N-acetylneuraminate lyase</fullName>
        <shortName evidence="1">NAL</shortName>
        <shortName evidence="1">Neu5Ac lyase</shortName>
        <ecNumber evidence="1">4.1.3.3</ecNumber>
    </recommendedName>
    <alternativeName>
        <fullName evidence="1">N-acetylneuraminate pyruvate-lyase</fullName>
    </alternativeName>
    <alternativeName>
        <fullName evidence="1">N-acetylneuraminic acid aldolase</fullName>
    </alternativeName>
    <alternativeName>
        <fullName evidence="1">Sialate lyase</fullName>
    </alternativeName>
    <alternativeName>
        <fullName evidence="1">Sialic acid aldolase</fullName>
    </alternativeName>
    <alternativeName>
        <fullName evidence="1">Sialic acid lyase</fullName>
    </alternativeName>
</protein>
<gene>
    <name evidence="1" type="primary">nanA</name>
    <name type="ordered locus">SNSL254_A3602</name>
</gene>
<evidence type="ECO:0000255" key="1">
    <source>
        <dbReference type="HAMAP-Rule" id="MF_01237"/>
    </source>
</evidence>
<comment type="function">
    <text evidence="1">Catalyzes the reversible aldol cleavage of N-acetylneuraminic acid (sialic acid; Neu5Ac) to form pyruvate and N-acetylmannosamine (ManNAc) via a Schiff base intermediate.</text>
</comment>
<comment type="catalytic activity">
    <reaction evidence="1">
        <text>aceneuramate = aldehydo-N-acetyl-D-mannosamine + pyruvate</text>
        <dbReference type="Rhea" id="RHEA:23296"/>
        <dbReference type="ChEBI" id="CHEBI:15361"/>
        <dbReference type="ChEBI" id="CHEBI:17122"/>
        <dbReference type="ChEBI" id="CHEBI:173083"/>
        <dbReference type="EC" id="4.1.3.3"/>
    </reaction>
</comment>
<comment type="pathway">
    <text evidence="1">Amino-sugar metabolism; N-acetylneuraminate degradation; D-fructose 6-phosphate from N-acetylneuraminate: step 1/5.</text>
</comment>
<comment type="subunit">
    <text evidence="1">Homotetramer.</text>
</comment>
<comment type="subcellular location">
    <subcellularLocation>
        <location evidence="1">Cytoplasm</location>
    </subcellularLocation>
</comment>
<comment type="similarity">
    <text evidence="1">Belongs to the DapA family. NanA subfamily.</text>
</comment>
<dbReference type="EC" id="4.1.3.3" evidence="1"/>
<dbReference type="EMBL" id="CP001113">
    <property type="protein sequence ID" value="ACF64250.1"/>
    <property type="molecule type" value="Genomic_DNA"/>
</dbReference>
<dbReference type="RefSeq" id="WP_001029665.1">
    <property type="nucleotide sequence ID" value="NZ_CCMR01000001.1"/>
</dbReference>
<dbReference type="SMR" id="B4T750"/>
<dbReference type="KEGG" id="see:SNSL254_A3602"/>
<dbReference type="HOGENOM" id="CLU_049343_6_0_6"/>
<dbReference type="UniPathway" id="UPA00629">
    <property type="reaction ID" value="UER00680"/>
</dbReference>
<dbReference type="Proteomes" id="UP000008824">
    <property type="component" value="Chromosome"/>
</dbReference>
<dbReference type="GO" id="GO:0005829">
    <property type="term" value="C:cytosol"/>
    <property type="evidence" value="ECO:0007669"/>
    <property type="project" value="TreeGrafter"/>
</dbReference>
<dbReference type="GO" id="GO:0008747">
    <property type="term" value="F:N-acetylneuraminate lyase activity"/>
    <property type="evidence" value="ECO:0007669"/>
    <property type="project" value="UniProtKB-UniRule"/>
</dbReference>
<dbReference type="GO" id="GO:0005975">
    <property type="term" value="P:carbohydrate metabolic process"/>
    <property type="evidence" value="ECO:0007669"/>
    <property type="project" value="UniProtKB-UniRule"/>
</dbReference>
<dbReference type="GO" id="GO:0019262">
    <property type="term" value="P:N-acetylneuraminate catabolic process"/>
    <property type="evidence" value="ECO:0007669"/>
    <property type="project" value="UniProtKB-UniRule"/>
</dbReference>
<dbReference type="CDD" id="cd00954">
    <property type="entry name" value="NAL"/>
    <property type="match status" value="1"/>
</dbReference>
<dbReference type="FunFam" id="3.20.20.70:FF:000039">
    <property type="entry name" value="N-acetylneuraminate lyase"/>
    <property type="match status" value="1"/>
</dbReference>
<dbReference type="Gene3D" id="3.20.20.70">
    <property type="entry name" value="Aldolase class I"/>
    <property type="match status" value="1"/>
</dbReference>
<dbReference type="HAMAP" id="MF_01237">
    <property type="entry name" value="N_acetylneuram_lyase"/>
    <property type="match status" value="1"/>
</dbReference>
<dbReference type="InterPro" id="IPR013785">
    <property type="entry name" value="Aldolase_TIM"/>
</dbReference>
<dbReference type="InterPro" id="IPR002220">
    <property type="entry name" value="DapA-like"/>
</dbReference>
<dbReference type="InterPro" id="IPR005264">
    <property type="entry name" value="NanA"/>
</dbReference>
<dbReference type="InterPro" id="IPR020625">
    <property type="entry name" value="Schiff_base-form_aldolases_AS"/>
</dbReference>
<dbReference type="InterPro" id="IPR020624">
    <property type="entry name" value="Schiff_base-form_aldolases_CS"/>
</dbReference>
<dbReference type="NCBIfam" id="TIGR00683">
    <property type="entry name" value="nanA"/>
    <property type="match status" value="1"/>
</dbReference>
<dbReference type="NCBIfam" id="NF003164">
    <property type="entry name" value="PRK04147.1"/>
    <property type="match status" value="1"/>
</dbReference>
<dbReference type="PANTHER" id="PTHR42849">
    <property type="entry name" value="N-ACETYLNEURAMINATE LYASE"/>
    <property type="match status" value="1"/>
</dbReference>
<dbReference type="PANTHER" id="PTHR42849:SF1">
    <property type="entry name" value="N-ACETYLNEURAMINATE LYASE"/>
    <property type="match status" value="1"/>
</dbReference>
<dbReference type="Pfam" id="PF00701">
    <property type="entry name" value="DHDPS"/>
    <property type="match status" value="1"/>
</dbReference>
<dbReference type="PIRSF" id="PIRSF001365">
    <property type="entry name" value="DHDPS"/>
    <property type="match status" value="1"/>
</dbReference>
<dbReference type="PRINTS" id="PR00146">
    <property type="entry name" value="DHPICSNTHASE"/>
</dbReference>
<dbReference type="SMART" id="SM01130">
    <property type="entry name" value="DHDPS"/>
    <property type="match status" value="1"/>
</dbReference>
<dbReference type="SUPFAM" id="SSF51569">
    <property type="entry name" value="Aldolase"/>
    <property type="match status" value="1"/>
</dbReference>
<dbReference type="PROSITE" id="PS00665">
    <property type="entry name" value="DHDPS_1"/>
    <property type="match status" value="1"/>
</dbReference>
<dbReference type="PROSITE" id="PS00666">
    <property type="entry name" value="DHDPS_2"/>
    <property type="match status" value="1"/>
</dbReference>
<sequence>MAKALQGVMAALLTPFDHQQQLDSESLRRLVRFNIGQGIDGLYVGGSTGEAFVQSLAEREQVLEIVAEEAKGKITLIAHVGTVSTAESQQLASAAKRYGFDAVSAVTPFYYPFSFEEHCDHYRAIIDSADGLPMVVYNIPALSGVKLTLDQINTLVTLPGVSALKQTSGDLFQMEQIRRAHPDLVLYNGYDEIFASGLLAGADGGIGSTYNIMGWRYQGIVQALREGDVAKAQRLQTECNKVIDLLIKTGVFRGLKTVLHYMDVLSVPLCRKPFAPVDEKYLPALKALAQQLMEEKA</sequence>
<name>NANA_SALNS</name>
<reference key="1">
    <citation type="journal article" date="2011" name="J. Bacteriol.">
        <title>Comparative genomics of 28 Salmonella enterica isolates: evidence for CRISPR-mediated adaptive sublineage evolution.</title>
        <authorList>
            <person name="Fricke W.F."/>
            <person name="Mammel M.K."/>
            <person name="McDermott P.F."/>
            <person name="Tartera C."/>
            <person name="White D.G."/>
            <person name="Leclerc J.E."/>
            <person name="Ravel J."/>
            <person name="Cebula T.A."/>
        </authorList>
    </citation>
    <scope>NUCLEOTIDE SEQUENCE [LARGE SCALE GENOMIC DNA]</scope>
    <source>
        <strain>SL254</strain>
    </source>
</reference>
<accession>B4T750</accession>
<feature type="chain" id="PRO_1000139743" description="N-acetylneuraminate lyase">
    <location>
        <begin position="1"/>
        <end position="297"/>
    </location>
</feature>
<feature type="active site" description="Proton donor" evidence="1">
    <location>
        <position position="137"/>
    </location>
</feature>
<feature type="active site" description="Schiff-base intermediate with substrate" evidence="1">
    <location>
        <position position="165"/>
    </location>
</feature>
<feature type="binding site" evidence="1">
    <location>
        <position position="47"/>
    </location>
    <ligand>
        <name>aceneuramate</name>
        <dbReference type="ChEBI" id="CHEBI:173083"/>
    </ligand>
</feature>
<feature type="binding site" evidence="1">
    <location>
        <position position="48"/>
    </location>
    <ligand>
        <name>aceneuramate</name>
        <dbReference type="ChEBI" id="CHEBI:173083"/>
    </ligand>
</feature>
<feature type="binding site" evidence="1">
    <location>
        <position position="167"/>
    </location>
    <ligand>
        <name>aceneuramate</name>
        <dbReference type="ChEBI" id="CHEBI:173083"/>
    </ligand>
</feature>
<feature type="binding site" evidence="1">
    <location>
        <position position="189"/>
    </location>
    <ligand>
        <name>aceneuramate</name>
        <dbReference type="ChEBI" id="CHEBI:173083"/>
    </ligand>
</feature>
<feature type="binding site" evidence="1">
    <location>
        <position position="191"/>
    </location>
    <ligand>
        <name>aceneuramate</name>
        <dbReference type="ChEBI" id="CHEBI:173083"/>
    </ligand>
</feature>
<feature type="binding site" evidence="1">
    <location>
        <position position="192"/>
    </location>
    <ligand>
        <name>aceneuramate</name>
        <dbReference type="ChEBI" id="CHEBI:173083"/>
    </ligand>
</feature>
<feature type="binding site" evidence="1">
    <location>
        <position position="208"/>
    </location>
    <ligand>
        <name>aceneuramate</name>
        <dbReference type="ChEBI" id="CHEBI:173083"/>
    </ligand>
</feature>